<dbReference type="EC" id="1.1.5.3"/>
<dbReference type="EMBL" id="Z38059">
    <property type="protein sequence ID" value="CAA86123.1"/>
    <property type="molecule type" value="Genomic_DNA"/>
</dbReference>
<dbReference type="EMBL" id="X71660">
    <property type="protein sequence ID" value="CAA50652.1"/>
    <property type="molecule type" value="Genomic_DNA"/>
</dbReference>
<dbReference type="EMBL" id="AY692867">
    <property type="protein sequence ID" value="AAT92886.1"/>
    <property type="molecule type" value="Genomic_DNA"/>
</dbReference>
<dbReference type="EMBL" id="BK006942">
    <property type="protein sequence ID" value="DAA08398.1"/>
    <property type="molecule type" value="Genomic_DNA"/>
</dbReference>
<dbReference type="PIR" id="S38190">
    <property type="entry name" value="S48379"/>
</dbReference>
<dbReference type="RefSeq" id="NP_012111.1">
    <property type="nucleotide sequence ID" value="NM_001179503.1"/>
</dbReference>
<dbReference type="SMR" id="P32191"/>
<dbReference type="BioGRID" id="34837">
    <property type="interactions" value="94"/>
</dbReference>
<dbReference type="DIP" id="DIP-7385N"/>
<dbReference type="FunCoup" id="P32191">
    <property type="interactions" value="826"/>
</dbReference>
<dbReference type="IntAct" id="P32191">
    <property type="interactions" value="7"/>
</dbReference>
<dbReference type="STRING" id="4932.YIL155C"/>
<dbReference type="iPTMnet" id="P32191"/>
<dbReference type="PaxDb" id="4932-YIL155C"/>
<dbReference type="PeptideAtlas" id="P32191"/>
<dbReference type="EnsemblFungi" id="YIL155C_mRNA">
    <property type="protein sequence ID" value="YIL155C"/>
    <property type="gene ID" value="YIL155C"/>
</dbReference>
<dbReference type="GeneID" id="854651"/>
<dbReference type="KEGG" id="sce:YIL155C"/>
<dbReference type="AGR" id="SGD:S000001417"/>
<dbReference type="SGD" id="S000001417">
    <property type="gene designation" value="GUT2"/>
</dbReference>
<dbReference type="VEuPathDB" id="FungiDB:YIL155C"/>
<dbReference type="eggNOG" id="KOG0042">
    <property type="taxonomic scope" value="Eukaryota"/>
</dbReference>
<dbReference type="GeneTree" id="ENSGT00390000001718"/>
<dbReference type="HOGENOM" id="CLU_015740_4_1_1"/>
<dbReference type="InParanoid" id="P32191"/>
<dbReference type="OMA" id="PHIVKPM"/>
<dbReference type="OrthoDB" id="264015at2759"/>
<dbReference type="BioCyc" id="MetaCyc:YIL155C-MONOMER"/>
<dbReference type="BioCyc" id="YEAST:YIL155C-MONOMER"/>
<dbReference type="Reactome" id="R-SCE-1483166">
    <property type="pathway name" value="Synthesis of PA"/>
</dbReference>
<dbReference type="Reactome" id="R-SCE-163560">
    <property type="pathway name" value="Triglyceride catabolism"/>
</dbReference>
<dbReference type="SABIO-RK" id="P32191"/>
<dbReference type="UniPathway" id="UPA00618">
    <property type="reaction ID" value="UER00673"/>
</dbReference>
<dbReference type="BioGRID-ORCS" id="854651">
    <property type="hits" value="10 hits in 10 CRISPR screens"/>
</dbReference>
<dbReference type="PRO" id="PR:P32191"/>
<dbReference type="Proteomes" id="UP000002311">
    <property type="component" value="Chromosome IX"/>
</dbReference>
<dbReference type="RNAct" id="P32191">
    <property type="molecule type" value="protein"/>
</dbReference>
<dbReference type="GO" id="GO:0005743">
    <property type="term" value="C:mitochondrial inner membrane"/>
    <property type="evidence" value="ECO:0007669"/>
    <property type="project" value="UniProtKB-SubCell"/>
</dbReference>
<dbReference type="GO" id="GO:0005758">
    <property type="term" value="C:mitochondrial intermembrane space"/>
    <property type="evidence" value="ECO:0007669"/>
    <property type="project" value="UniProtKB-SubCell"/>
</dbReference>
<dbReference type="GO" id="GO:0005741">
    <property type="term" value="C:mitochondrial outer membrane"/>
    <property type="evidence" value="ECO:0000314"/>
    <property type="project" value="SGD"/>
</dbReference>
<dbReference type="GO" id="GO:0005739">
    <property type="term" value="C:mitochondrion"/>
    <property type="evidence" value="ECO:0000314"/>
    <property type="project" value="SGD"/>
</dbReference>
<dbReference type="GO" id="GO:0004368">
    <property type="term" value="F:glycerol-3-phosphate dehydrogenase (quinone) activity"/>
    <property type="evidence" value="ECO:0000314"/>
    <property type="project" value="SGD"/>
</dbReference>
<dbReference type="GO" id="GO:0019563">
    <property type="term" value="P:glycerol catabolic process"/>
    <property type="evidence" value="ECO:0007669"/>
    <property type="project" value="UniProtKB-UniPathway"/>
</dbReference>
<dbReference type="GO" id="GO:0006071">
    <property type="term" value="P:glycerol metabolic process"/>
    <property type="evidence" value="ECO:0000315"/>
    <property type="project" value="SGD"/>
</dbReference>
<dbReference type="GO" id="GO:0006072">
    <property type="term" value="P:glycerol-3-phosphate metabolic process"/>
    <property type="evidence" value="ECO:0000318"/>
    <property type="project" value="GO_Central"/>
</dbReference>
<dbReference type="GO" id="GO:0006127">
    <property type="term" value="P:glycerol-3-phosphate shuttle"/>
    <property type="evidence" value="ECO:0000318"/>
    <property type="project" value="GO_Central"/>
</dbReference>
<dbReference type="FunFam" id="1.10.8.870:FF:000005">
    <property type="entry name" value="Glycerol-3-phosphate dehydrogenase"/>
    <property type="match status" value="1"/>
</dbReference>
<dbReference type="FunFam" id="3.30.9.10:FF:000037">
    <property type="entry name" value="Glycerol-3-phosphate dehydrogenase"/>
    <property type="match status" value="1"/>
</dbReference>
<dbReference type="Gene3D" id="1.10.8.870">
    <property type="entry name" value="Alpha-glycerophosphate oxidase, cap domain"/>
    <property type="match status" value="1"/>
</dbReference>
<dbReference type="Gene3D" id="3.30.9.10">
    <property type="entry name" value="D-Amino Acid Oxidase, subunit A, domain 2"/>
    <property type="match status" value="1"/>
</dbReference>
<dbReference type="Gene3D" id="3.50.50.60">
    <property type="entry name" value="FAD/NAD(P)-binding domain"/>
    <property type="match status" value="1"/>
</dbReference>
<dbReference type="InterPro" id="IPR031656">
    <property type="entry name" value="DAO_C"/>
</dbReference>
<dbReference type="InterPro" id="IPR038299">
    <property type="entry name" value="DAO_C_sf"/>
</dbReference>
<dbReference type="InterPro" id="IPR006076">
    <property type="entry name" value="FAD-dep_OxRdtase"/>
</dbReference>
<dbReference type="InterPro" id="IPR036188">
    <property type="entry name" value="FAD/NAD-bd_sf"/>
</dbReference>
<dbReference type="InterPro" id="IPR000447">
    <property type="entry name" value="G3P_DH_FAD-dep"/>
</dbReference>
<dbReference type="PANTHER" id="PTHR11985">
    <property type="entry name" value="GLYCEROL-3-PHOSPHATE DEHYDROGENASE"/>
    <property type="match status" value="1"/>
</dbReference>
<dbReference type="PANTHER" id="PTHR11985:SF15">
    <property type="entry name" value="GLYCEROL-3-PHOSPHATE DEHYDROGENASE, MITOCHONDRIAL"/>
    <property type="match status" value="1"/>
</dbReference>
<dbReference type="Pfam" id="PF01266">
    <property type="entry name" value="DAO"/>
    <property type="match status" value="1"/>
</dbReference>
<dbReference type="Pfam" id="PF16901">
    <property type="entry name" value="DAO_C"/>
    <property type="match status" value="1"/>
</dbReference>
<dbReference type="PRINTS" id="PR01001">
    <property type="entry name" value="FADG3PDH"/>
</dbReference>
<dbReference type="SUPFAM" id="SSF54373">
    <property type="entry name" value="FAD-linked reductases, C-terminal domain"/>
    <property type="match status" value="1"/>
</dbReference>
<dbReference type="SUPFAM" id="SSF51905">
    <property type="entry name" value="FAD/NAD(P)-binding domain"/>
    <property type="match status" value="1"/>
</dbReference>
<dbReference type="PROSITE" id="PS00977">
    <property type="entry name" value="FAD_G3PDH_1"/>
    <property type="match status" value="1"/>
</dbReference>
<dbReference type="PROSITE" id="PS00978">
    <property type="entry name" value="FAD_G3PDH_2"/>
    <property type="match status" value="1"/>
</dbReference>
<organism>
    <name type="scientific">Saccharomyces cerevisiae (strain ATCC 204508 / S288c)</name>
    <name type="common">Baker's yeast</name>
    <dbReference type="NCBI Taxonomy" id="559292"/>
    <lineage>
        <taxon>Eukaryota</taxon>
        <taxon>Fungi</taxon>
        <taxon>Dikarya</taxon>
        <taxon>Ascomycota</taxon>
        <taxon>Saccharomycotina</taxon>
        <taxon>Saccharomycetes</taxon>
        <taxon>Saccharomycetales</taxon>
        <taxon>Saccharomycetaceae</taxon>
        <taxon>Saccharomyces</taxon>
    </lineage>
</organism>
<sequence>MFSVTRRRAAGAAAAMATATGTLYWMTSQGDRPLVHNDPSYMVQFPTAAPPQVSRRDLLDRLAKTHQFDVLIIGGGATGTGCALDAATRGLNVALVEKGDFASGTSSKSTKMIHGGVRYLEKAFWEFSKAQLDLVIEALNERKHLINTAPHLCTVLPILIPIYSTWQVPYIYMGCKFYDFFAGSQNLKKSYLLSKSATVEKAPMLTTDNLKASLVYHDGSFNDSRLNATLAITAVENGATVLNYVEVQKLIKDPTSGKVIGAEARDVETNELVRINAKCVVNATGPYSDAILQMDRNPSGLPDSPLNDNSKIKSTFNQIAVMDPKMVIPSIGVHIVLPSFYCPKDMGLLDVRTSDGRVMFFLPWQGKVLAGTTDIPLKQVPENPMPTEADIQDILKELQHYIEFPVKREDVLSAWAGVRPLVRDPRTIPADGKKGSATQGVVRSHFLFTSDNGLITIAGGKWTTYRQMAEETVDKVVEVGGFHNLKPCHTRDIKLAGAEEWTQNYVALLAQNYHLSSKMSNYLVQNYGTRSSIICEFFKESMENKLPLSLADKENNVIYSSEENNLVNFDTFRYPFTIGELKYSMQYEYCRTPLDFLLRRTRFAFLDAKEALNAVHATVKVMGDEFNWSEKKRQWELEKTVNFIKTFGV</sequence>
<evidence type="ECO:0000255" key="1"/>
<evidence type="ECO:0000269" key="2">
    <source>
    </source>
</evidence>
<evidence type="ECO:0000269" key="3">
    <source>
    </source>
</evidence>
<evidence type="ECO:0000269" key="4">
    <source>
    </source>
</evidence>
<evidence type="ECO:0000305" key="5"/>
<gene>
    <name type="primary">GUT2</name>
    <name type="ordered locus">YIL155C</name>
</gene>
<comment type="catalytic activity">
    <reaction>
        <text>a quinone + sn-glycerol 3-phosphate = dihydroxyacetone phosphate + a quinol</text>
        <dbReference type="Rhea" id="RHEA:18977"/>
        <dbReference type="ChEBI" id="CHEBI:24646"/>
        <dbReference type="ChEBI" id="CHEBI:57597"/>
        <dbReference type="ChEBI" id="CHEBI:57642"/>
        <dbReference type="ChEBI" id="CHEBI:132124"/>
        <dbReference type="EC" id="1.1.5.3"/>
    </reaction>
</comment>
<comment type="cofactor">
    <cofactor>
        <name>FAD</name>
        <dbReference type="ChEBI" id="CHEBI:57692"/>
    </cofactor>
</comment>
<comment type="pathway">
    <text>Polyol metabolism; glycerol degradation via glycerol kinase pathway; glycerone phosphate from sn-glycerol 3-phosphate (anaerobic route): step 1/1.</text>
</comment>
<comment type="subcellular location">
    <subcellularLocation>
        <location evidence="2">Mitochondrion inner membrane</location>
    </subcellularLocation>
    <subcellularLocation>
        <location evidence="4">Mitochondrion intermembrane space</location>
    </subcellularLocation>
</comment>
<comment type="miscellaneous">
    <text evidence="3">Present with 1670 molecules/cell in log phase SD medium.</text>
</comment>
<comment type="similarity">
    <text evidence="5">Belongs to the FAD-dependent glycerol-3-phosphate dehydrogenase family.</text>
</comment>
<proteinExistence type="evidence at protein level"/>
<keyword id="KW-0274">FAD</keyword>
<keyword id="KW-0285">Flavoprotein</keyword>
<keyword id="KW-0472">Membrane</keyword>
<keyword id="KW-0496">Mitochondrion</keyword>
<keyword id="KW-0999">Mitochondrion inner membrane</keyword>
<keyword id="KW-0560">Oxidoreductase</keyword>
<keyword id="KW-1185">Reference proteome</keyword>
<keyword id="KW-0809">Transit peptide</keyword>
<name>GPDM_YEAST</name>
<protein>
    <recommendedName>
        <fullName>Glycerol-3-phosphate dehydrogenase, mitochondrial</fullName>
        <shortName>GPD-M</shortName>
        <shortName>GPDH-M</shortName>
        <ecNumber>1.1.5.3</ecNumber>
    </recommendedName>
</protein>
<feature type="transit peptide" description="Mitochondrion" evidence="1">
    <location>
        <begin position="1"/>
        <end status="unknown"/>
    </location>
</feature>
<feature type="chain" id="PRO_0000010434" description="Glycerol-3-phosphate dehydrogenase, mitochondrial">
    <location>
        <begin status="unknown"/>
        <end position="649"/>
    </location>
</feature>
<feature type="binding site" evidence="1">
    <location>
        <begin position="69"/>
        <end position="97"/>
    </location>
    <ligand>
        <name>FAD</name>
        <dbReference type="ChEBI" id="CHEBI:57692"/>
    </ligand>
</feature>
<feature type="sequence conflict" description="In Ref. 1." evidence="5" ref="1">
    <original>MFSVTRRRAAGAAAAMATATGTLYWMTSQGDRPLVHNDPSYMVQFPTAAPP</original>
    <variation>MTRATWCNSPPPLHR</variation>
    <location>
        <begin position="1"/>
        <end position="51"/>
    </location>
</feature>
<feature type="sequence conflict" description="In Ref. 1; CAA50652." evidence="5" ref="1">
    <original>A</original>
    <variation>D</variation>
    <location>
        <position position="63"/>
    </location>
</feature>
<feature type="sequence conflict" description="In Ref. 1; CAA50652." evidence="5" ref="1">
    <original>A</original>
    <variation>G</variation>
    <location>
        <position position="182"/>
    </location>
</feature>
<feature type="sequence conflict" description="In Ref. 1; CAA50652." evidence="5" ref="1">
    <original>A</original>
    <variation>G</variation>
    <location>
        <position position="234"/>
    </location>
</feature>
<feature type="sequence conflict" description="In Ref. 1; CAA50652." evidence="5" ref="1">
    <original>N</original>
    <variation>I</variation>
    <location>
        <position position="243"/>
    </location>
</feature>
<feature type="sequence conflict" description="In Ref. 4; AAT92886." evidence="5" ref="4">
    <original>K</original>
    <variation>R</variation>
    <location>
        <position position="249"/>
    </location>
</feature>
<feature type="sequence conflict" description="In Ref. 1; CAA50652." evidence="5" ref="1">
    <original>A</original>
    <variation>S</variation>
    <location>
        <position position="320"/>
    </location>
</feature>
<feature type="sequence conflict" description="In Ref. 1; CAA50652." evidence="5" ref="1">
    <original>C</original>
    <variation>S</variation>
    <location>
        <position position="342"/>
    </location>
</feature>
<feature type="sequence conflict" description="In Ref. 1; CAA50652." evidence="5" ref="1">
    <original>KT</original>
    <variation>QGR</variation>
    <location>
        <begin position="645"/>
        <end position="646"/>
    </location>
</feature>
<reference key="1">
    <citation type="journal article" date="1993" name="Yeast">
        <title>GUT2, a gene for mitochondrial glycerol 3-phosphate dehydrogenase of Saccharomyces cerevisiae.</title>
        <authorList>
            <person name="Roennow B."/>
            <person name="Kielland-Brandt M.C."/>
        </authorList>
    </citation>
    <scope>NUCLEOTIDE SEQUENCE [GENOMIC DNA]</scope>
    <source>
        <strain>S288c / GRF88</strain>
    </source>
</reference>
<reference key="2">
    <citation type="journal article" date="1997" name="Nature">
        <title>The nucleotide sequence of Saccharomyces cerevisiae chromosome IX.</title>
        <authorList>
            <person name="Churcher C.M."/>
            <person name="Bowman S."/>
            <person name="Badcock K."/>
            <person name="Bankier A.T."/>
            <person name="Brown D."/>
            <person name="Chillingworth T."/>
            <person name="Connor R."/>
            <person name="Devlin K."/>
            <person name="Gentles S."/>
            <person name="Hamlin N."/>
            <person name="Harris D.E."/>
            <person name="Horsnell T."/>
            <person name="Hunt S."/>
            <person name="Jagels K."/>
            <person name="Jones M."/>
            <person name="Lye G."/>
            <person name="Moule S."/>
            <person name="Odell C."/>
            <person name="Pearson D."/>
            <person name="Rajandream M.A."/>
            <person name="Rice P."/>
            <person name="Rowley N."/>
            <person name="Skelton J."/>
            <person name="Smith V."/>
            <person name="Walsh S.V."/>
            <person name="Whitehead S."/>
            <person name="Barrell B.G."/>
        </authorList>
    </citation>
    <scope>NUCLEOTIDE SEQUENCE [LARGE SCALE GENOMIC DNA]</scope>
    <source>
        <strain>ATCC 204508 / S288c</strain>
    </source>
</reference>
<reference key="3">
    <citation type="journal article" date="2014" name="G3 (Bethesda)">
        <title>The reference genome sequence of Saccharomyces cerevisiae: Then and now.</title>
        <authorList>
            <person name="Engel S.R."/>
            <person name="Dietrich F.S."/>
            <person name="Fisk D.G."/>
            <person name="Binkley G."/>
            <person name="Balakrishnan R."/>
            <person name="Costanzo M.C."/>
            <person name="Dwight S.S."/>
            <person name="Hitz B.C."/>
            <person name="Karra K."/>
            <person name="Nash R.S."/>
            <person name="Weng S."/>
            <person name="Wong E.D."/>
            <person name="Lloyd P."/>
            <person name="Skrzypek M.S."/>
            <person name="Miyasato S.R."/>
            <person name="Simison M."/>
            <person name="Cherry J.M."/>
        </authorList>
    </citation>
    <scope>GENOME REANNOTATION</scope>
    <source>
        <strain>ATCC 204508 / S288c</strain>
    </source>
</reference>
<reference key="4">
    <citation type="journal article" date="2007" name="Genome Res.">
        <title>Approaching a complete repository of sequence-verified protein-encoding clones for Saccharomyces cerevisiae.</title>
        <authorList>
            <person name="Hu Y."/>
            <person name="Rolfs A."/>
            <person name="Bhullar B."/>
            <person name="Murthy T.V.S."/>
            <person name="Zhu C."/>
            <person name="Berger M.F."/>
            <person name="Camargo A.A."/>
            <person name="Kelley F."/>
            <person name="McCarron S."/>
            <person name="Jepson D."/>
            <person name="Richardson A."/>
            <person name="Raphael J."/>
            <person name="Moreira D."/>
            <person name="Taycher E."/>
            <person name="Zuo D."/>
            <person name="Mohr S."/>
            <person name="Kane M.F."/>
            <person name="Williamson J."/>
            <person name="Simpson A.J.G."/>
            <person name="Bulyk M.L."/>
            <person name="Harlow E."/>
            <person name="Marsischky G."/>
            <person name="Kolodner R.D."/>
            <person name="LaBaer J."/>
        </authorList>
    </citation>
    <scope>NUCLEOTIDE SEQUENCE [GENOMIC DNA]</scope>
    <source>
        <strain>ATCC 204508 / S288c</strain>
    </source>
</reference>
<reference key="5">
    <citation type="journal article" date="2001" name="Biochemistry">
        <title>Yeast mitochondrial dehydrogenases are associated in a supramolecular complex.</title>
        <authorList>
            <person name="Grandier-Vazeille X."/>
            <person name="Bathany K."/>
            <person name="Chaignepain S."/>
            <person name="Camougrand N."/>
            <person name="Manon S."/>
            <person name="Schmitter J.-M."/>
        </authorList>
    </citation>
    <scope>SUBCELLULAR LOCATION</scope>
</reference>
<reference key="6">
    <citation type="journal article" date="2003" name="Nature">
        <title>Global analysis of protein expression in yeast.</title>
        <authorList>
            <person name="Ghaemmaghami S."/>
            <person name="Huh W.-K."/>
            <person name="Bower K."/>
            <person name="Howson R.W."/>
            <person name="Belle A."/>
            <person name="Dephoure N."/>
            <person name="O'Shea E.K."/>
            <person name="Weissman J.S."/>
        </authorList>
    </citation>
    <scope>LEVEL OF PROTEIN EXPRESSION [LARGE SCALE ANALYSIS]</scope>
</reference>
<reference key="7">
    <citation type="journal article" date="2012" name="Mol. Cell. Proteomics">
        <title>Intermembrane space proteome of yeast mitochondria.</title>
        <authorList>
            <person name="Voegtle F.N."/>
            <person name="Burkhart J.M."/>
            <person name="Rao S."/>
            <person name="Gerbeth C."/>
            <person name="Hinrichs J."/>
            <person name="Martinou J.C."/>
            <person name="Chacinska A."/>
            <person name="Sickmann A."/>
            <person name="Zahedi R.P."/>
            <person name="Meisinger C."/>
        </authorList>
    </citation>
    <scope>IDENTIFICATION BY MASS SPECTROMETRY</scope>
    <scope>SUBCELLULAR LOCATION [LARGE SCALE ANALYSIS]</scope>
</reference>
<accession>P32191</accession>
<accession>D6VVD2</accession>
<accession>E9P8Y2</accession>